<reference key="1">
    <citation type="journal article" date="2009" name="PLoS ONE">
        <title>Salmonella paratyphi C: genetic divergence from Salmonella choleraesuis and pathogenic convergence with Salmonella typhi.</title>
        <authorList>
            <person name="Liu W.-Q."/>
            <person name="Feng Y."/>
            <person name="Wang Y."/>
            <person name="Zou Q.-H."/>
            <person name="Chen F."/>
            <person name="Guo J.-T."/>
            <person name="Peng Y.-H."/>
            <person name="Jin Y."/>
            <person name="Li Y.-G."/>
            <person name="Hu S.-N."/>
            <person name="Johnston R.N."/>
            <person name="Liu G.-R."/>
            <person name="Liu S.-L."/>
        </authorList>
    </citation>
    <scope>NUCLEOTIDE SEQUENCE [LARGE SCALE GENOMIC DNA]</scope>
    <source>
        <strain>RKS4594</strain>
    </source>
</reference>
<proteinExistence type="inferred from homology"/>
<feature type="chain" id="PRO_1000194262" description="Small ribosomal subunit protein bS20">
    <location>
        <begin position="1"/>
        <end position="87"/>
    </location>
</feature>
<feature type="region of interest" description="Disordered" evidence="2">
    <location>
        <begin position="1"/>
        <end position="26"/>
    </location>
</feature>
<accession>C0Q4I2</accession>
<keyword id="KW-0687">Ribonucleoprotein</keyword>
<keyword id="KW-0689">Ribosomal protein</keyword>
<keyword id="KW-0694">RNA-binding</keyword>
<keyword id="KW-0699">rRNA-binding</keyword>
<organism>
    <name type="scientific">Salmonella paratyphi C (strain RKS4594)</name>
    <dbReference type="NCBI Taxonomy" id="476213"/>
    <lineage>
        <taxon>Bacteria</taxon>
        <taxon>Pseudomonadati</taxon>
        <taxon>Pseudomonadota</taxon>
        <taxon>Gammaproteobacteria</taxon>
        <taxon>Enterobacterales</taxon>
        <taxon>Enterobacteriaceae</taxon>
        <taxon>Salmonella</taxon>
    </lineage>
</organism>
<name>RS20_SALPC</name>
<comment type="function">
    <text evidence="1">Binds directly to 16S ribosomal RNA.</text>
</comment>
<comment type="similarity">
    <text evidence="1">Belongs to the bacterial ribosomal protein bS20 family.</text>
</comment>
<sequence>MANIKSAKKRAVQSEKARKHNASRRSMMRTFIKKVYAAIEAGDKAAALKAFNEMQPIVDRQAAKGLIHKNKAARHKANLTAQINKLA</sequence>
<evidence type="ECO:0000255" key="1">
    <source>
        <dbReference type="HAMAP-Rule" id="MF_00500"/>
    </source>
</evidence>
<evidence type="ECO:0000256" key="2">
    <source>
        <dbReference type="SAM" id="MobiDB-lite"/>
    </source>
</evidence>
<evidence type="ECO:0000305" key="3"/>
<gene>
    <name evidence="1" type="primary">rpsT</name>
    <name type="ordered locus">SPC_0045</name>
</gene>
<dbReference type="EMBL" id="CP000857">
    <property type="protein sequence ID" value="ACN44237.1"/>
    <property type="molecule type" value="Genomic_DNA"/>
</dbReference>
<dbReference type="RefSeq" id="WP_001518655.1">
    <property type="nucleotide sequence ID" value="NC_012125.1"/>
</dbReference>
<dbReference type="SMR" id="C0Q4I2"/>
<dbReference type="GeneID" id="93310349"/>
<dbReference type="KEGG" id="sei:SPC_0045"/>
<dbReference type="HOGENOM" id="CLU_160655_4_0_6"/>
<dbReference type="Proteomes" id="UP000001599">
    <property type="component" value="Chromosome"/>
</dbReference>
<dbReference type="GO" id="GO:0005829">
    <property type="term" value="C:cytosol"/>
    <property type="evidence" value="ECO:0007669"/>
    <property type="project" value="TreeGrafter"/>
</dbReference>
<dbReference type="GO" id="GO:0015935">
    <property type="term" value="C:small ribosomal subunit"/>
    <property type="evidence" value="ECO:0007669"/>
    <property type="project" value="TreeGrafter"/>
</dbReference>
<dbReference type="GO" id="GO:0070181">
    <property type="term" value="F:small ribosomal subunit rRNA binding"/>
    <property type="evidence" value="ECO:0007669"/>
    <property type="project" value="TreeGrafter"/>
</dbReference>
<dbReference type="GO" id="GO:0003735">
    <property type="term" value="F:structural constituent of ribosome"/>
    <property type="evidence" value="ECO:0007669"/>
    <property type="project" value="InterPro"/>
</dbReference>
<dbReference type="GO" id="GO:0006412">
    <property type="term" value="P:translation"/>
    <property type="evidence" value="ECO:0007669"/>
    <property type="project" value="UniProtKB-UniRule"/>
</dbReference>
<dbReference type="FunFam" id="1.20.58.110:FF:000001">
    <property type="entry name" value="30S ribosomal protein S20"/>
    <property type="match status" value="1"/>
</dbReference>
<dbReference type="Gene3D" id="1.20.58.110">
    <property type="entry name" value="Ribosomal protein S20"/>
    <property type="match status" value="1"/>
</dbReference>
<dbReference type="HAMAP" id="MF_00500">
    <property type="entry name" value="Ribosomal_bS20"/>
    <property type="match status" value="1"/>
</dbReference>
<dbReference type="InterPro" id="IPR002583">
    <property type="entry name" value="Ribosomal_bS20"/>
</dbReference>
<dbReference type="InterPro" id="IPR036510">
    <property type="entry name" value="Ribosomal_bS20_sf"/>
</dbReference>
<dbReference type="NCBIfam" id="TIGR00029">
    <property type="entry name" value="S20"/>
    <property type="match status" value="1"/>
</dbReference>
<dbReference type="PANTHER" id="PTHR33398">
    <property type="entry name" value="30S RIBOSOMAL PROTEIN S20"/>
    <property type="match status" value="1"/>
</dbReference>
<dbReference type="PANTHER" id="PTHR33398:SF1">
    <property type="entry name" value="SMALL RIBOSOMAL SUBUNIT PROTEIN BS20C"/>
    <property type="match status" value="1"/>
</dbReference>
<dbReference type="Pfam" id="PF01649">
    <property type="entry name" value="Ribosomal_S20p"/>
    <property type="match status" value="1"/>
</dbReference>
<dbReference type="SUPFAM" id="SSF46992">
    <property type="entry name" value="Ribosomal protein S20"/>
    <property type="match status" value="1"/>
</dbReference>
<protein>
    <recommendedName>
        <fullName evidence="1">Small ribosomal subunit protein bS20</fullName>
    </recommendedName>
    <alternativeName>
        <fullName evidence="3">30S ribosomal protein S20</fullName>
    </alternativeName>
</protein>